<comment type="catalytic activity">
    <reaction evidence="1">
        <text>N-(5-phospho-beta-D-ribosyl)anthranilate = 1-(2-carboxyphenylamino)-1-deoxy-D-ribulose 5-phosphate</text>
        <dbReference type="Rhea" id="RHEA:21540"/>
        <dbReference type="ChEBI" id="CHEBI:18277"/>
        <dbReference type="ChEBI" id="CHEBI:58613"/>
        <dbReference type="EC" id="5.3.1.24"/>
    </reaction>
</comment>
<comment type="pathway">
    <text evidence="1">Amino-acid biosynthesis; L-tryptophan biosynthesis; L-tryptophan from chorismate: step 3/5.</text>
</comment>
<comment type="similarity">
    <text evidence="1">Belongs to the TrpF family.</text>
</comment>
<comment type="sequence caution" evidence="2">
    <conflict type="erroneous initiation">
        <sequence resource="EMBL-CDS" id="AAW36655"/>
    </conflict>
</comment>
<dbReference type="EC" id="5.3.1.24" evidence="1"/>
<dbReference type="EMBL" id="CP000046">
    <property type="protein sequence ID" value="AAW36655.1"/>
    <property type="status" value="ALT_INIT"/>
    <property type="molecule type" value="Genomic_DNA"/>
</dbReference>
<dbReference type="RefSeq" id="WP_000768192.1">
    <property type="nucleotide sequence ID" value="NZ_JBGOFO010000003.1"/>
</dbReference>
<dbReference type="SMR" id="Q5HG48"/>
<dbReference type="KEGG" id="sac:SACOL1407"/>
<dbReference type="HOGENOM" id="CLU_076364_1_1_9"/>
<dbReference type="UniPathway" id="UPA00035">
    <property type="reaction ID" value="UER00042"/>
</dbReference>
<dbReference type="Proteomes" id="UP000000530">
    <property type="component" value="Chromosome"/>
</dbReference>
<dbReference type="GO" id="GO:0004640">
    <property type="term" value="F:phosphoribosylanthranilate isomerase activity"/>
    <property type="evidence" value="ECO:0007669"/>
    <property type="project" value="UniProtKB-UniRule"/>
</dbReference>
<dbReference type="GO" id="GO:0000162">
    <property type="term" value="P:L-tryptophan biosynthetic process"/>
    <property type="evidence" value="ECO:0007669"/>
    <property type="project" value="UniProtKB-UniRule"/>
</dbReference>
<dbReference type="CDD" id="cd00405">
    <property type="entry name" value="PRAI"/>
    <property type="match status" value="1"/>
</dbReference>
<dbReference type="FunFam" id="3.20.20.70:FF:000277">
    <property type="entry name" value="Phosphoribosylanthranilate isomerase"/>
    <property type="match status" value="1"/>
</dbReference>
<dbReference type="Gene3D" id="3.20.20.70">
    <property type="entry name" value="Aldolase class I"/>
    <property type="match status" value="1"/>
</dbReference>
<dbReference type="HAMAP" id="MF_00135">
    <property type="entry name" value="PRAI"/>
    <property type="match status" value="1"/>
</dbReference>
<dbReference type="InterPro" id="IPR013785">
    <property type="entry name" value="Aldolase_TIM"/>
</dbReference>
<dbReference type="InterPro" id="IPR001240">
    <property type="entry name" value="PRAI_dom"/>
</dbReference>
<dbReference type="InterPro" id="IPR011060">
    <property type="entry name" value="RibuloseP-bd_barrel"/>
</dbReference>
<dbReference type="InterPro" id="IPR044643">
    <property type="entry name" value="TrpF_fam"/>
</dbReference>
<dbReference type="NCBIfam" id="NF010563">
    <property type="entry name" value="PRK13958.1"/>
    <property type="match status" value="1"/>
</dbReference>
<dbReference type="PANTHER" id="PTHR42894">
    <property type="entry name" value="N-(5'-PHOSPHORIBOSYL)ANTHRANILATE ISOMERASE"/>
    <property type="match status" value="1"/>
</dbReference>
<dbReference type="PANTHER" id="PTHR42894:SF1">
    <property type="entry name" value="N-(5'-PHOSPHORIBOSYL)ANTHRANILATE ISOMERASE"/>
    <property type="match status" value="1"/>
</dbReference>
<dbReference type="Pfam" id="PF00697">
    <property type="entry name" value="PRAI"/>
    <property type="match status" value="1"/>
</dbReference>
<dbReference type="SUPFAM" id="SSF51366">
    <property type="entry name" value="Ribulose-phoshate binding barrel"/>
    <property type="match status" value="1"/>
</dbReference>
<protein>
    <recommendedName>
        <fullName evidence="1">N-(5'-phosphoribosyl)anthranilate isomerase</fullName>
        <shortName evidence="1">PRAI</shortName>
        <ecNumber evidence="1">5.3.1.24</ecNumber>
    </recommendedName>
</protein>
<keyword id="KW-0028">Amino-acid biosynthesis</keyword>
<keyword id="KW-0057">Aromatic amino acid biosynthesis</keyword>
<keyword id="KW-0413">Isomerase</keyword>
<keyword id="KW-0822">Tryptophan biosynthesis</keyword>
<proteinExistence type="inferred from homology"/>
<gene>
    <name evidence="1" type="primary">trpF</name>
    <name type="ordered locus">SACOL1407</name>
</gene>
<accession>Q5HG48</accession>
<sequence length="210" mass="23389">MKLKFCGFTSIKDVTAASQLPIDAIGFIHYEKSKRHQTITQIKKLASAVPNHIDKVCVMVNPDLTTIEHVLSNTSINTIQLHGTESIDFIQEIKKKYSSIKITKALAADENIIQNINKYKGFVDLFIIDTPSVSYGGTGQTYDWTILKHIKDIPYLIAGGINSENIQTVNQLKLSHQGYDLASGIEVNGRKDIEKMTAIVNIVKGDRDNE</sequence>
<organism>
    <name type="scientific">Staphylococcus aureus (strain COL)</name>
    <dbReference type="NCBI Taxonomy" id="93062"/>
    <lineage>
        <taxon>Bacteria</taxon>
        <taxon>Bacillati</taxon>
        <taxon>Bacillota</taxon>
        <taxon>Bacilli</taxon>
        <taxon>Bacillales</taxon>
        <taxon>Staphylococcaceae</taxon>
        <taxon>Staphylococcus</taxon>
    </lineage>
</organism>
<reference key="1">
    <citation type="journal article" date="2005" name="J. Bacteriol.">
        <title>Insights on evolution of virulence and resistance from the complete genome analysis of an early methicillin-resistant Staphylococcus aureus strain and a biofilm-producing methicillin-resistant Staphylococcus epidermidis strain.</title>
        <authorList>
            <person name="Gill S.R."/>
            <person name="Fouts D.E."/>
            <person name="Archer G.L."/>
            <person name="Mongodin E.F."/>
            <person name="DeBoy R.T."/>
            <person name="Ravel J."/>
            <person name="Paulsen I.T."/>
            <person name="Kolonay J.F."/>
            <person name="Brinkac L.M."/>
            <person name="Beanan M.J."/>
            <person name="Dodson R.J."/>
            <person name="Daugherty S.C."/>
            <person name="Madupu R."/>
            <person name="Angiuoli S.V."/>
            <person name="Durkin A.S."/>
            <person name="Haft D.H."/>
            <person name="Vamathevan J.J."/>
            <person name="Khouri H."/>
            <person name="Utterback T.R."/>
            <person name="Lee C."/>
            <person name="Dimitrov G."/>
            <person name="Jiang L."/>
            <person name="Qin H."/>
            <person name="Weidman J."/>
            <person name="Tran K."/>
            <person name="Kang K.H."/>
            <person name="Hance I.R."/>
            <person name="Nelson K.E."/>
            <person name="Fraser C.M."/>
        </authorList>
    </citation>
    <scope>NUCLEOTIDE SEQUENCE [LARGE SCALE GENOMIC DNA]</scope>
    <source>
        <strain>COL</strain>
    </source>
</reference>
<feature type="chain" id="PRO_0000154376" description="N-(5'-phosphoribosyl)anthranilate isomerase">
    <location>
        <begin position="1"/>
        <end position="210"/>
    </location>
</feature>
<evidence type="ECO:0000255" key="1">
    <source>
        <dbReference type="HAMAP-Rule" id="MF_00135"/>
    </source>
</evidence>
<evidence type="ECO:0000305" key="2"/>
<name>TRPF_STAAC</name>